<feature type="chain" id="PRO_0000259002" description="Nucleotide-binding protein Sala_2050">
    <location>
        <begin position="1"/>
        <end position="316"/>
    </location>
</feature>
<feature type="region of interest" description="Disordered" evidence="2">
    <location>
        <begin position="283"/>
        <end position="316"/>
    </location>
</feature>
<feature type="binding site" evidence="1">
    <location>
        <begin position="18"/>
        <end position="25"/>
    </location>
    <ligand>
        <name>ATP</name>
        <dbReference type="ChEBI" id="CHEBI:30616"/>
    </ligand>
</feature>
<feature type="binding site" evidence="1">
    <location>
        <begin position="69"/>
        <end position="72"/>
    </location>
    <ligand>
        <name>GTP</name>
        <dbReference type="ChEBI" id="CHEBI:37565"/>
    </ligand>
</feature>
<comment type="function">
    <text evidence="1">Displays ATPase and GTPase activities.</text>
</comment>
<comment type="similarity">
    <text evidence="1">Belongs to the RapZ-like family.</text>
</comment>
<protein>
    <recommendedName>
        <fullName evidence="1">Nucleotide-binding protein Sala_2050</fullName>
    </recommendedName>
</protein>
<reference key="1">
    <citation type="journal article" date="2009" name="Proc. Natl. Acad. Sci. U.S.A.">
        <title>The genomic basis of trophic strategy in marine bacteria.</title>
        <authorList>
            <person name="Lauro F.M."/>
            <person name="McDougald D."/>
            <person name="Thomas T."/>
            <person name="Williams T.J."/>
            <person name="Egan S."/>
            <person name="Rice S."/>
            <person name="DeMaere M.Z."/>
            <person name="Ting L."/>
            <person name="Ertan H."/>
            <person name="Johnson J."/>
            <person name="Ferriera S."/>
            <person name="Lapidus A."/>
            <person name="Anderson I."/>
            <person name="Kyrpides N."/>
            <person name="Munk A.C."/>
            <person name="Detter C."/>
            <person name="Han C.S."/>
            <person name="Brown M.V."/>
            <person name="Robb F.T."/>
            <person name="Kjelleberg S."/>
            <person name="Cavicchioli R."/>
        </authorList>
    </citation>
    <scope>NUCLEOTIDE SEQUENCE [LARGE SCALE GENOMIC DNA]</scope>
    <source>
        <strain>DSM 13593 / LMG 18877 / RB2256</strain>
    </source>
</reference>
<keyword id="KW-0067">ATP-binding</keyword>
<keyword id="KW-0342">GTP-binding</keyword>
<keyword id="KW-0547">Nucleotide-binding</keyword>
<keyword id="KW-1185">Reference proteome</keyword>
<evidence type="ECO:0000255" key="1">
    <source>
        <dbReference type="HAMAP-Rule" id="MF_00636"/>
    </source>
</evidence>
<evidence type="ECO:0000256" key="2">
    <source>
        <dbReference type="SAM" id="MobiDB-lite"/>
    </source>
</evidence>
<dbReference type="EMBL" id="CP000356">
    <property type="protein sequence ID" value="ABF53759.1"/>
    <property type="molecule type" value="Genomic_DNA"/>
</dbReference>
<dbReference type="RefSeq" id="WP_011542335.1">
    <property type="nucleotide sequence ID" value="NC_008048.1"/>
</dbReference>
<dbReference type="SMR" id="Q1GRG3"/>
<dbReference type="STRING" id="317655.Sala_2050"/>
<dbReference type="KEGG" id="sal:Sala_2050"/>
<dbReference type="eggNOG" id="COG1660">
    <property type="taxonomic scope" value="Bacteria"/>
</dbReference>
<dbReference type="HOGENOM" id="CLU_059558_0_0_5"/>
<dbReference type="OrthoDB" id="9784461at2"/>
<dbReference type="Proteomes" id="UP000006578">
    <property type="component" value="Chromosome"/>
</dbReference>
<dbReference type="GO" id="GO:0005524">
    <property type="term" value="F:ATP binding"/>
    <property type="evidence" value="ECO:0007669"/>
    <property type="project" value="UniProtKB-UniRule"/>
</dbReference>
<dbReference type="GO" id="GO:0005525">
    <property type="term" value="F:GTP binding"/>
    <property type="evidence" value="ECO:0007669"/>
    <property type="project" value="UniProtKB-UniRule"/>
</dbReference>
<dbReference type="Gene3D" id="3.40.50.300">
    <property type="entry name" value="P-loop containing nucleotide triphosphate hydrolases"/>
    <property type="match status" value="1"/>
</dbReference>
<dbReference type="HAMAP" id="MF_00636">
    <property type="entry name" value="RapZ_like"/>
    <property type="match status" value="1"/>
</dbReference>
<dbReference type="InterPro" id="IPR027417">
    <property type="entry name" value="P-loop_NTPase"/>
</dbReference>
<dbReference type="InterPro" id="IPR005337">
    <property type="entry name" value="RapZ-like"/>
</dbReference>
<dbReference type="InterPro" id="IPR053930">
    <property type="entry name" value="RapZ-like_N"/>
</dbReference>
<dbReference type="InterPro" id="IPR053931">
    <property type="entry name" value="RapZ_C"/>
</dbReference>
<dbReference type="NCBIfam" id="NF003828">
    <property type="entry name" value="PRK05416.1"/>
    <property type="match status" value="1"/>
</dbReference>
<dbReference type="PANTHER" id="PTHR30448">
    <property type="entry name" value="RNASE ADAPTER PROTEIN RAPZ"/>
    <property type="match status" value="1"/>
</dbReference>
<dbReference type="PANTHER" id="PTHR30448:SF0">
    <property type="entry name" value="RNASE ADAPTER PROTEIN RAPZ"/>
    <property type="match status" value="1"/>
</dbReference>
<dbReference type="Pfam" id="PF22740">
    <property type="entry name" value="PapZ_C"/>
    <property type="match status" value="1"/>
</dbReference>
<dbReference type="Pfam" id="PF03668">
    <property type="entry name" value="RapZ-like_N"/>
    <property type="match status" value="1"/>
</dbReference>
<dbReference type="PIRSF" id="PIRSF005052">
    <property type="entry name" value="P-loopkin"/>
    <property type="match status" value="1"/>
</dbReference>
<dbReference type="SUPFAM" id="SSF52540">
    <property type="entry name" value="P-loop containing nucleoside triphosphate hydrolases"/>
    <property type="match status" value="1"/>
</dbReference>
<sequence length="316" mass="34678">MSGQASPGAESRLLLVTGLSGAGKSTVLKVLEDLGWEVVDNLPLALLEALIDAPVKRGEAERPLAVGIDSRSRGFRPALLVRRIKELREGGGRDIQTLFLDCAGAELERRFSETRRRHPLAEDRPAADGIAREREMMEPLRRWAEHVVDTTNYSSNDLQQEVRQRFGEADDGEPVLNILSFGFARGLPRNADLVFDMRYLRNPHWDPALKPGTGLDPDVAAYVIADPAYEETVSQIERLILTLLPRYRAEGKSYVTIAFGCTGGRHRSVHVAARVAQTLRGSGYEPTLTHRNLDSAPQDGLEGKPPSAARASGGAR</sequence>
<organism>
    <name type="scientific">Sphingopyxis alaskensis (strain DSM 13593 / LMG 18877 / RB2256)</name>
    <name type="common">Sphingomonas alaskensis</name>
    <dbReference type="NCBI Taxonomy" id="317655"/>
    <lineage>
        <taxon>Bacteria</taxon>
        <taxon>Pseudomonadati</taxon>
        <taxon>Pseudomonadota</taxon>
        <taxon>Alphaproteobacteria</taxon>
        <taxon>Sphingomonadales</taxon>
        <taxon>Sphingomonadaceae</taxon>
        <taxon>Sphingopyxis</taxon>
    </lineage>
</organism>
<gene>
    <name type="ordered locus">Sala_2050</name>
</gene>
<proteinExistence type="inferred from homology"/>
<name>Y2050_SPHAL</name>
<accession>Q1GRG3</accession>